<comment type="function">
    <text evidence="1 8 10 11 12 14 15 16">Phosphatidylinositol 3,4,5-trisphosphate-dependent GTPase-activating protein that modulates actin cytoskeleton remodeling by regulating ARF and RHO family members (PubMed:11804590, PubMed:19666464). Activated by phosphatidylinositol 3,4,5-trisphosphate (PtdIns(3,4,5)P3) binding and, to a lesser extent, by phosphatidylinositol 3,4-bisphosphate (PtdIns(3,4)P2) binding (PubMed:11804590). Has a preference for ARF1 and ARF5 (PubMed:11804590, PubMed:19666464). Positively regulates the ring size of circular dorsal ruffles and promotes macropinocytosis (PubMed:22573888). Acts as a bridging factor in osteoclasts to control actin and membrane dynamics (By similarity). Regulates the condensing of osteoclast podosomes into sealing zones which segregate the bone-facing membrane from other membrane domains and are required for osteoclast resorption activity (By similarity). Also regulates recruitment of the AP-3 complex to endosomal membranes and trafficking of lysosomal membrane proteins to the ruffled membrane border of osteoclasts to modulate bone resorption (By similarity). Regulates the endocytic trafficking of EGFR (PubMed:18764928, PubMed:18939958, PubMed:21275903). Regulates the incorporation of CD63 and CD9 into multivesicular bodies (PubMed:38682696). Required in the retinal pigment epithelium (RPE) for photoreceptor survival due to its role in promoting RPE phagocytosis (By similarity).</text>
</comment>
<comment type="subunit">
    <text evidence="1 9 14">Interacts with SH3KBP1/CIN85 (via SH3 domains) (PubMed:21275903). The interaction is independent of EGF and does not affect ARAP1 GTPase-activating activity but is involved in regulating ubiquitination and endocytic trafficking of EGFR (PubMed:21275903). ARAP1 competes with E3 ubiquitin-protein ligase CBL for binding to SH3KBP1, preventing interaction of CBL with SH3KBP1; this is likely to regulate SH3KBP1-mediated internalization of EGFR (By similarity). Interacts with TNFRSF10A (PubMed:18165900).</text>
</comment>
<comment type="interaction">
    <interactant intactId="EBI-710003">
        <id>Q96P48</id>
    </interactant>
    <interactant intactId="EBI-518861">
        <id>O00220</id>
        <label>TNFRSF10A</label>
    </interactant>
    <organismsDiffer>false</organismsDiffer>
    <experiments>4</experiments>
</comment>
<comment type="interaction">
    <interactant intactId="EBI-710003">
        <id>Q96P48</id>
    </interactant>
    <interactant intactId="EBI-353208">
        <id>P12956</id>
        <label>XRCC6</label>
    </interactant>
    <organismsDiffer>false</organismsDiffer>
    <experiments>2</experiments>
</comment>
<comment type="interaction">
    <interactant intactId="EBI-710003">
        <id>Q96P48</id>
    </interactant>
    <interactant intactId="EBI-8753518">
        <id>PRO_0000037576</id>
        <dbReference type="UniProtKB" id="P27958"/>
    </interactant>
    <organismsDiffer>true</organismsDiffer>
    <experiments>3</experiments>
</comment>
<comment type="subcellular location">
    <subcellularLocation>
        <location evidence="8">Cytoplasm</location>
    </subcellularLocation>
    <subcellularLocation>
        <location evidence="11">Golgi apparatus</location>
        <location evidence="11">trans-Golgi network</location>
    </subcellularLocation>
    <subcellularLocation>
        <location evidence="8 10 11">Golgi apparatus</location>
        <location evidence="8 10 11">Golgi stack</location>
    </subcellularLocation>
    <subcellularLocation>
        <location evidence="9 11 15">Cell membrane</location>
        <topology evidence="24">Peripheral membrane protein</topology>
    </subcellularLocation>
    <subcellularLocation>
        <location evidence="11">Endosome</location>
        <location evidence="11">Multivesicular body</location>
    </subcellularLocation>
    <subcellularLocation>
        <location evidence="15">Cell projection</location>
        <location evidence="15">Ruffle</location>
    </subcellularLocation>
    <subcellularLocation>
        <location evidence="1">Cell projection</location>
        <location evidence="1">Podosome</location>
    </subcellularLocation>
    <subcellularLocation>
        <location evidence="1">Early endosome</location>
    </subcellularLocation>
    <text evidence="1 8">Associated with Golgi stacks in resting cells (PubMed:11804590). Throughout the cytoplasm and in surface protrusions in cells that are in the process of attaching to a surface and spreading (PubMed:11804590). Localizes to actin-rich podosomes, sealing zones and early endosomes in osteoclasts (By similarity).</text>
</comment>
<comment type="alternative products">
    <event type="alternative splicing"/>
    <isoform>
        <id>Q96P48-6</id>
        <name>6</name>
        <name evidence="20">ARAP1b</name>
        <sequence type="displayed"/>
    </isoform>
    <isoform>
        <id>Q96P48-1</id>
        <name>1</name>
        <sequence type="described" ref="VSP_036607 VSP_036608"/>
    </isoform>
    <isoform>
        <id>Q96P48-2</id>
        <name>2</name>
        <sequence type="described" ref="VSP_036607 VSP_036608 VSP_000311"/>
    </isoform>
    <isoform>
        <id>Q96P48-3</id>
        <name>3</name>
        <sequence type="described" ref="VSP_000311"/>
    </isoform>
    <isoform>
        <id>Q96P48-4</id>
        <name>4</name>
        <sequence type="described" ref="VSP_015000"/>
    </isoform>
    <isoform>
        <id>Q96P48-5</id>
        <name>5</name>
        <sequence type="described" ref="VSP_014998 VSP_015001 VSP_000311"/>
    </isoform>
    <isoform>
        <id>Q96P48-7</id>
        <name>7</name>
        <sequence type="described" ref="VSP_015000 VSP_043530 VSP_000311"/>
    </isoform>
</comment>
<comment type="tissue specificity">
    <text evidence="8">Detected in heart, skeletal muscle, spleen, kidney, liver, placenta, lung, peripheral blood leukocytes, adrenal gland, bone marrow, brain, lymph node, mammary gland, prostate, spinal cord, stomach, thyroid and trachea.</text>
</comment>
<comment type="domain">
    <text evidence="11 12">The first PH domain, PH 1, interacts with PtdIns(3,4,5)P3 which stimulates ARAP1 GTPase-activating activity and is also required for ARAP1-mediated regulation of endocytic trafficking of EGFR (PubMed:18939958, PubMed:19666464). It does not mediate PtdIns(3,4,5)P3-dependent recruitment of ARAP1 to membranes although this may be mediated by other PH domains (PubMed:19666464).</text>
</comment>
<comment type="PTM">
    <text evidence="11 13">Phosphorylated by PTK6 following EGF stimulation which enhances EGFR signaling by delaying EGFR down-regulation; the interaction is mediated by the SH2 domain of PTK6 (PubMed:20554524). Phosphorylation promotes association with the Golgi apparatus and endosomes (PubMed:18939958).</text>
</comment>
<comment type="sequence caution" evidence="24">
    <conflict type="erroneous initiation">
        <sequence resource="EMBL-CDS" id="BAA34502"/>
    </conflict>
</comment>
<comment type="sequence caution" evidence="24">
    <conflict type="erroneous initiation">
        <sequence resource="EMBL-CDS" id="BAD92710"/>
    </conflict>
</comment>
<organism>
    <name type="scientific">Homo sapiens</name>
    <name type="common">Human</name>
    <dbReference type="NCBI Taxonomy" id="9606"/>
    <lineage>
        <taxon>Eukaryota</taxon>
        <taxon>Metazoa</taxon>
        <taxon>Chordata</taxon>
        <taxon>Craniata</taxon>
        <taxon>Vertebrata</taxon>
        <taxon>Euteleostomi</taxon>
        <taxon>Mammalia</taxon>
        <taxon>Eutheria</taxon>
        <taxon>Euarchontoglires</taxon>
        <taxon>Primates</taxon>
        <taxon>Haplorrhini</taxon>
        <taxon>Catarrhini</taxon>
        <taxon>Hominidae</taxon>
        <taxon>Homo</taxon>
    </lineage>
</organism>
<evidence type="ECO:0000250" key="1">
    <source>
        <dbReference type="UniProtKB" id="Q4LDD4"/>
    </source>
</evidence>
<evidence type="ECO:0000255" key="2">
    <source>
        <dbReference type="PROSITE-ProRule" id="PRU00145"/>
    </source>
</evidence>
<evidence type="ECO:0000255" key="3">
    <source>
        <dbReference type="PROSITE-ProRule" id="PRU00166"/>
    </source>
</evidence>
<evidence type="ECO:0000255" key="4">
    <source>
        <dbReference type="PROSITE-ProRule" id="PRU00172"/>
    </source>
</evidence>
<evidence type="ECO:0000255" key="5">
    <source>
        <dbReference type="PROSITE-ProRule" id="PRU00184"/>
    </source>
</evidence>
<evidence type="ECO:0000255" key="6">
    <source>
        <dbReference type="PROSITE-ProRule" id="PRU00288"/>
    </source>
</evidence>
<evidence type="ECO:0000256" key="7">
    <source>
        <dbReference type="SAM" id="MobiDB-lite"/>
    </source>
</evidence>
<evidence type="ECO:0000269" key="8">
    <source>
    </source>
</evidence>
<evidence type="ECO:0000269" key="9">
    <source>
    </source>
</evidence>
<evidence type="ECO:0000269" key="10">
    <source>
    </source>
</evidence>
<evidence type="ECO:0000269" key="11">
    <source>
    </source>
</evidence>
<evidence type="ECO:0000269" key="12">
    <source>
    </source>
</evidence>
<evidence type="ECO:0000269" key="13">
    <source>
    </source>
</evidence>
<evidence type="ECO:0000269" key="14">
    <source>
    </source>
</evidence>
<evidence type="ECO:0000269" key="15">
    <source>
    </source>
</evidence>
<evidence type="ECO:0000269" key="16">
    <source>
    </source>
</evidence>
<evidence type="ECO:0000269" key="17">
    <source ref="6"/>
</evidence>
<evidence type="ECO:0000303" key="18">
    <source>
    </source>
</evidence>
<evidence type="ECO:0000303" key="19">
    <source>
    </source>
</evidence>
<evidence type="ECO:0000303" key="20">
    <source>
    </source>
</evidence>
<evidence type="ECO:0000303" key="21">
    <source>
    </source>
</evidence>
<evidence type="ECO:0000303" key="22">
    <source ref="6"/>
</evidence>
<evidence type="ECO:0000303" key="23">
    <source ref="9"/>
</evidence>
<evidence type="ECO:0000305" key="24"/>
<evidence type="ECO:0007744" key="25">
    <source>
    </source>
</evidence>
<evidence type="ECO:0007744" key="26">
    <source>
    </source>
</evidence>
<evidence type="ECO:0007744" key="27">
    <source>
    </source>
</evidence>
<evidence type="ECO:0007744" key="28">
    <source>
    </source>
</evidence>
<evidence type="ECO:0007744" key="29">
    <source>
    </source>
</evidence>
<reference key="1">
    <citation type="journal article" date="2002" name="Mol. Cell">
        <title>ARAP1: a point of convergence for Arf and Rho signaling.</title>
        <authorList>
            <person name="Miura K."/>
            <person name="Jacques K.M."/>
            <person name="Stauffer S."/>
            <person name="Kubosaki A."/>
            <person name="Zhu K."/>
            <person name="Hirsch D.S."/>
            <person name="Resau J."/>
            <person name="Zheng Y."/>
            <person name="Randazzo P.A."/>
        </authorList>
    </citation>
    <scope>NUCLEOTIDE SEQUENCE [MRNA] (ISOFORM 1)</scope>
    <scope>FUNCTION</scope>
    <scope>SUBCELLULAR LOCATION</scope>
    <scope>TISSUE SPECIFICITY</scope>
</reference>
<reference key="2">
    <citation type="submission" date="2004-01" db="EMBL/GenBank/DDBJ databases">
        <title>ARAP1 splice variants in man and mouse.</title>
        <authorList>
            <person name="Krugmann S."/>
            <person name="Coadwell J."/>
            <person name="Stephens L.R."/>
            <person name="Hawkins P.T."/>
        </authorList>
    </citation>
    <scope>NUCLEOTIDE SEQUENCE [MRNA] (ISOFORM 6)</scope>
</reference>
<reference key="3">
    <citation type="journal article" date="1998" name="DNA Res.">
        <title>Prediction of the coding sequences of unidentified human genes. XI. The complete sequences of 100 new cDNA clones from brain which code for large proteins in vitro.</title>
        <authorList>
            <person name="Nagase T."/>
            <person name="Ishikawa K."/>
            <person name="Suyama M."/>
            <person name="Kikuno R."/>
            <person name="Miyajima N."/>
            <person name="Tanaka A."/>
            <person name="Kotani H."/>
            <person name="Nomura N."/>
            <person name="Ohara O."/>
        </authorList>
    </citation>
    <scope>NUCLEOTIDE SEQUENCE [LARGE SCALE MRNA] (ISOFORM 4)</scope>
    <source>
        <tissue>Brain</tissue>
    </source>
</reference>
<reference key="4">
    <citation type="journal article" date="2002" name="DNA Res.">
        <title>Construction of expression-ready cDNA clones for KIAA genes: manual curation of 330 KIAA cDNA clones.</title>
        <authorList>
            <person name="Nakajima D."/>
            <person name="Okazaki N."/>
            <person name="Yamakawa H."/>
            <person name="Kikuno R."/>
            <person name="Ohara O."/>
            <person name="Nagase T."/>
        </authorList>
    </citation>
    <scope>SEQUENCE REVISION</scope>
</reference>
<reference key="5">
    <citation type="journal article" date="2008" name="Traffic">
        <title>ARAP1 regulates endocytosis of EGFR.</title>
        <authorList>
            <person name="Yoon H.Y."/>
            <person name="Lee J.S."/>
            <person name="Randazzo P.A."/>
        </authorList>
    </citation>
    <scope>NUCLEOTIDE SEQUENCE [MRNA] (ISOFORM 6)</scope>
    <scope>FUNCTION</scope>
    <scope>SUBCELLULAR LOCATION</scope>
    <scope>PHOSPHORYLATION</scope>
    <scope>ROLE OF PH DOMAIN 1</scope>
</reference>
<reference key="6">
    <citation type="submission" date="2005-03" db="EMBL/GenBank/DDBJ databases">
        <authorList>
            <person name="Totoki Y."/>
            <person name="Toyoda A."/>
            <person name="Takeda T."/>
            <person name="Sakaki Y."/>
            <person name="Tanaka A."/>
            <person name="Yokoyama S."/>
            <person name="Ohara O."/>
            <person name="Nagase T."/>
            <person name="Kikuno R.F."/>
        </authorList>
    </citation>
    <scope>NUCLEOTIDE SEQUENCE [LARGE SCALE MRNA] (ISOFORM 3)</scope>
    <scope>VARIANT GLU-1047</scope>
    <source>
        <tissue>Brain</tissue>
    </source>
</reference>
<reference key="7">
    <citation type="journal article" date="2006" name="Nature">
        <title>Human chromosome 11 DNA sequence and analysis including novel gene identification.</title>
        <authorList>
            <person name="Taylor T.D."/>
            <person name="Noguchi H."/>
            <person name="Totoki Y."/>
            <person name="Toyoda A."/>
            <person name="Kuroki Y."/>
            <person name="Dewar K."/>
            <person name="Lloyd C."/>
            <person name="Itoh T."/>
            <person name="Takeda T."/>
            <person name="Kim D.-W."/>
            <person name="She X."/>
            <person name="Barlow K.F."/>
            <person name="Bloom T."/>
            <person name="Bruford E."/>
            <person name="Chang J.L."/>
            <person name="Cuomo C.A."/>
            <person name="Eichler E."/>
            <person name="FitzGerald M.G."/>
            <person name="Jaffe D.B."/>
            <person name="LaButti K."/>
            <person name="Nicol R."/>
            <person name="Park H.-S."/>
            <person name="Seaman C."/>
            <person name="Sougnez C."/>
            <person name="Yang X."/>
            <person name="Zimmer A.R."/>
            <person name="Zody M.C."/>
            <person name="Birren B.W."/>
            <person name="Nusbaum C."/>
            <person name="Fujiyama A."/>
            <person name="Hattori M."/>
            <person name="Rogers J."/>
            <person name="Lander E.S."/>
            <person name="Sakaki Y."/>
        </authorList>
    </citation>
    <scope>NUCLEOTIDE SEQUENCE [LARGE SCALE GENOMIC DNA]</scope>
</reference>
<reference key="8">
    <citation type="journal article" date="2004" name="Genome Res.">
        <title>The status, quality, and expansion of the NIH full-length cDNA project: the Mammalian Gene Collection (MGC).</title>
        <authorList>
            <consortium name="The MGC Project Team"/>
        </authorList>
    </citation>
    <scope>NUCLEOTIDE SEQUENCE [LARGE SCALE MRNA] (ISOFORMS 5 AND 7)</scope>
    <scope>NUCLEOTIDE SEQUENCE [LARGE SCALE MRNA] OF 792-1450 (ISOFORMS 2/3/5)</scope>
    <source>
        <tissue>Brain</tissue>
        <tissue>Pancreas</tissue>
    </source>
</reference>
<reference key="9">
    <citation type="submission" date="2001-08" db="EMBL/GenBank/DDBJ databases">
        <title>KIAA0782 as a member (centaurin delta2) of the ArfGAP centaurin family.</title>
        <authorList>
            <person name="Hong W."/>
        </authorList>
    </citation>
    <scope>NUCLEOTIDE SEQUENCE [MRNA] OF 315-1450 (ISOFORM 1)</scope>
</reference>
<reference key="10">
    <citation type="journal article" date="2006" name="Cell">
        <title>Global, in vivo, and site-specific phosphorylation dynamics in signaling networks.</title>
        <authorList>
            <person name="Olsen J.V."/>
            <person name="Blagoev B."/>
            <person name="Gnad F."/>
            <person name="Macek B."/>
            <person name="Kumar C."/>
            <person name="Mortensen P."/>
            <person name="Mann M."/>
        </authorList>
    </citation>
    <scope>PHOSPHORYLATION [LARGE SCALE ANALYSIS] AT THR-354</scope>
    <scope>IDENTIFICATION BY MASS SPECTROMETRY [LARGE SCALE ANALYSIS]</scope>
    <source>
        <tissue>Cervix carcinoma</tissue>
    </source>
</reference>
<reference key="11">
    <citation type="journal article" date="2008" name="Apoptosis">
        <title>Arf and Rho GAP adapter protein ARAP1 participates in the mobilization of TRAIL-R1/DR4 to the plasma membrane.</title>
        <authorList>
            <person name="Simova S."/>
            <person name="Klima M."/>
            <person name="Cermak L."/>
            <person name="Sourkova V."/>
            <person name="Andera L."/>
        </authorList>
    </citation>
    <scope>INTERACTION WITH TNFRSF10A</scope>
    <scope>SUBCELLULAR LOCATION</scope>
</reference>
<reference key="12">
    <citation type="journal article" date="2008" name="J. Proteome Res.">
        <title>Combining protein-based IMAC, peptide-based IMAC, and MudPIT for efficient phosphoproteomic analysis.</title>
        <authorList>
            <person name="Cantin G.T."/>
            <person name="Yi W."/>
            <person name="Lu B."/>
            <person name="Park S.K."/>
            <person name="Xu T."/>
            <person name="Lee J.-D."/>
            <person name="Yates J.R. III"/>
        </authorList>
    </citation>
    <scope>IDENTIFICATION BY MASS SPECTROMETRY [LARGE SCALE ANALYSIS]</scope>
    <source>
        <tissue>Cervix carcinoma</tissue>
    </source>
</reference>
<reference key="13">
    <citation type="journal article" date="2008" name="Proc. Natl. Acad. Sci. U.S.A.">
        <title>A quantitative atlas of mitotic phosphorylation.</title>
        <authorList>
            <person name="Dephoure N."/>
            <person name="Zhou C."/>
            <person name="Villen J."/>
            <person name="Beausoleil S.A."/>
            <person name="Bakalarski C.E."/>
            <person name="Elledge S.J."/>
            <person name="Gygi S.P."/>
        </authorList>
    </citation>
    <scope>PHOSPHORYLATION [LARGE SCALE ANALYSIS] AT SER-229; TYR-431 AND SER-1435</scope>
    <scope>IDENTIFICATION BY MASS SPECTROMETRY [LARGE SCALE ANALYSIS]</scope>
    <source>
        <tissue>Cervix carcinoma</tissue>
    </source>
</reference>
<reference key="14">
    <citation type="journal article" date="2008" name="Traffic">
        <title>ARAP1 regulates EGF receptor trafficking and signalling.</title>
        <authorList>
            <person name="Daniele T."/>
            <person name="Di Tullio G."/>
            <person name="Santoro M."/>
            <person name="Turacchio G."/>
            <person name="De Matteis M.A."/>
        </authorList>
    </citation>
    <scope>FUNCTION</scope>
    <scope>SUBCELLULAR LOCATION</scope>
</reference>
<reference key="15">
    <citation type="journal article" date="2009" name="J. Biol. Chem.">
        <title>A PH domain in the Arf GTPase-activating protein (GAP) ARAP1 binds phosphatidylinositol 3,4,5-trisphosphate and regulates Arf GAP activity independently of recruitment to the plasma membranes.</title>
        <authorList>
            <person name="Campa F."/>
            <person name="Yoon H.Y."/>
            <person name="Ha V.L."/>
            <person name="Szentpetery Z."/>
            <person name="Balla T."/>
            <person name="Randazzo P.A."/>
        </authorList>
    </citation>
    <scope>FUNCTION</scope>
    <scope>ROLE OF PH DOMAIN 1</scope>
</reference>
<reference key="16">
    <citation type="journal article" date="2009" name="Sci. Signal.">
        <title>Quantitative phosphoproteomic analysis of T cell receptor signaling reveals system-wide modulation of protein-protein interactions.</title>
        <authorList>
            <person name="Mayya V."/>
            <person name="Lundgren D.H."/>
            <person name="Hwang S.-I."/>
            <person name="Rezaul K."/>
            <person name="Wu L."/>
            <person name="Eng J.K."/>
            <person name="Rodionov V."/>
            <person name="Han D.K."/>
        </authorList>
    </citation>
    <scope>PHOSPHORYLATION [LARGE SCALE ANALYSIS] AT SER-738 AND SER-1435</scope>
    <scope>IDENTIFICATION BY MASS SPECTROMETRY [LARGE SCALE ANALYSIS]</scope>
    <source>
        <tissue>Leukemic T-cell</tissue>
    </source>
</reference>
<reference key="17">
    <citation type="journal article" date="2010" name="J. Biol. Chem.">
        <title>PTK6 inhibits down-regulation of EGF receptor through phosphorylation of ARAP1.</title>
        <authorList>
            <person name="Kang S.A."/>
            <person name="Lee E.S."/>
            <person name="Yoon H.Y."/>
            <person name="Randazzo P.A."/>
            <person name="Lee S.T."/>
        </authorList>
    </citation>
    <scope>PHOSPHORYLATION AT TYR-231</scope>
    <scope>MUTAGENESIS OF TYR-23; TYR-231 AND TYR-288</scope>
</reference>
<reference key="18">
    <citation type="journal article" date="2010" name="Sci. Signal.">
        <title>Quantitative phosphoproteomics reveals widespread full phosphorylation site occupancy during mitosis.</title>
        <authorList>
            <person name="Olsen J.V."/>
            <person name="Vermeulen M."/>
            <person name="Santamaria A."/>
            <person name="Kumar C."/>
            <person name="Miller M.L."/>
            <person name="Jensen L.J."/>
            <person name="Gnad F."/>
            <person name="Cox J."/>
            <person name="Jensen T.S."/>
            <person name="Nigg E.A."/>
            <person name="Brunak S."/>
            <person name="Mann M."/>
        </authorList>
    </citation>
    <scope>PHOSPHORYLATION [LARGE SCALE ANALYSIS] AT SER-428</scope>
    <scope>IDENTIFICATION BY MASS SPECTROMETRY [LARGE SCALE ANALYSIS]</scope>
    <source>
        <tissue>Cervix carcinoma</tissue>
    </source>
</reference>
<reference key="19">
    <citation type="journal article" date="2011" name="Biol. Cell">
        <title>ARAP1 association with CIN85 affects epidermal growth factor receptor endocytic trafficking.</title>
        <authorList>
            <person name="Yoon H.Y."/>
            <person name="Kales S.C."/>
            <person name="Luo R."/>
            <person name="Lipkowitz S."/>
            <person name="Randazzo P.A."/>
        </authorList>
    </citation>
    <scope>FUNCTION</scope>
    <scope>INTERACTION WITH SH3KBP1</scope>
    <scope>MUTAGENESIS OF 81-PRO--ARG-86; PRO-81 AND 86-ARG--ARG-90</scope>
</reference>
<reference key="20">
    <citation type="journal article" date="2011" name="BMC Syst. Biol.">
        <title>Initial characterization of the human central proteome.</title>
        <authorList>
            <person name="Burkard T.R."/>
            <person name="Planyavsky M."/>
            <person name="Kaupe I."/>
            <person name="Breitwieser F.P."/>
            <person name="Buerckstuemmer T."/>
            <person name="Bennett K.L."/>
            <person name="Superti-Furga G."/>
            <person name="Colinge J."/>
        </authorList>
    </citation>
    <scope>IDENTIFICATION BY MASS SPECTROMETRY [LARGE SCALE ANALYSIS]</scope>
</reference>
<reference key="21">
    <citation type="journal article" date="2012" name="Mol. Biol. Cell">
        <title>ARAP1 regulates the ring size of circular dorsal ruffles through Arf1 and Arf5.</title>
        <authorList>
            <person name="Hasegawa J."/>
            <person name="Tsujita K."/>
            <person name="Takenawa T."/>
            <person name="Itoh T."/>
        </authorList>
    </citation>
    <scope>FUNCTION</scope>
    <scope>SUBCELLULAR LOCATION</scope>
    <scope>MUTAGENESIS OF ARG-578 AND ARG-993</scope>
</reference>
<reference key="22">
    <citation type="journal article" date="2013" name="J. Proteome Res.">
        <title>Toward a comprehensive characterization of a human cancer cell phosphoproteome.</title>
        <authorList>
            <person name="Zhou H."/>
            <person name="Di Palma S."/>
            <person name="Preisinger C."/>
            <person name="Peng M."/>
            <person name="Polat A.N."/>
            <person name="Heck A.J."/>
            <person name="Mohammed S."/>
        </authorList>
    </citation>
    <scope>PHOSPHORYLATION [LARGE SCALE ANALYSIS] AT SER-428; TYR-504; SER-738 AND SER-1428</scope>
    <scope>IDENTIFICATION BY MASS SPECTROMETRY [LARGE SCALE ANALYSIS]</scope>
    <source>
        <tissue>Cervix carcinoma</tissue>
        <tissue>Erythroleukemia</tissue>
    </source>
</reference>
<reference key="23">
    <citation type="journal article" date="2024" name="Biol. Open">
        <title>Arf GTPase-Activating proteins ADAP1 and ARAP1 regulate incorporation of CD63 in multivesicular bodies.</title>
        <authorList>
            <person name="Suzuki K."/>
            <person name="Okawa Y."/>
            <person name="Akter S."/>
            <person name="Ito H."/>
            <person name="Shiba Y."/>
        </authorList>
    </citation>
    <scope>FUNCTION</scope>
</reference>
<proteinExistence type="evidence at protein level"/>
<sequence>MAEAGDAALSVAEWLRALHLEQYTGLFEQHGLVWATECQGLSDTRLMDMGMLLPGHRRRILAGLLRAHTSPAPAPRPTPRPVPMKRHIFRSPPVPATPPEPLPTTTEDEGLPAAPPIPPRRSCLPPTCFTTPSTAAPDPVLPPLPAKRHLAELSVPPVPPRTGPPRLLVSLPTKEEESLLPSLSSPPQPQSEEPLSTLPQGPPQPPSPPPCPPEIPPKPVRLFPEFDDSDYDEVPEEGPGAPARVMTKKEEPPPSRVPRAVRVASLLSEGEELSGDDQGDEEEDDHAYEGVPNGGWHTSSLSLSLPSTIAAPHPMDGPPGGSTPVTPVIKAGWLDKNPPQGSYIYQKRWVRLDTDHLRYFDSNKDAYSKRFISVACISHVAAIGDQKFEVITNNRTFAFRAESDVERKEWMQALQQAMAEQRARARLSSAYLLGVPGSEQPDRAGSLELRGFKNKLYVAVVGDKVQLYKNLEEYHLGIGITFIDMSVGNVKEVDRRSFDLTTPYRIFSFSADSELEKEQWLEAMQGAIAEALSTSEVAERIWAAAPNRFCADCGAPQPDWASINLCVVICKRCAGEHRGLGAGVSKVRSLKMDRKVWTETLIELFLQLGNGAGNRFWAANVPPSEALQPSSSPSTRRCHLEAKYREGKYRRYHPLFGNQEELDKALCAAVTTTDLAETQALLGCGAGINCFSGDPEAPTPLALAEQAGQTLQMEFLRNNRTTEVPRLDSMKPLEKHYSVVLPTVSHSGFLYKTASAGKLLQDRRAREEFSRRWCVLGDGVLSYFENERAVTPNGEIRASEIVCLAVPPPDTHGFEHTFEVYTEGERLYLFGLESAEQAHEWVKCIAKAFVPPLAEDLLARDFERLGRLPYKAGLSLQRAQEGWFSLSGSELRAVFPEGPCEEPLQLRKLQELSIQGDSENQVLVLVERRRTLYIQGERRLDFMGWLGAIQKAAASMGDTLSEQQLGDSDIPVIVYRCVDYITQCGLTSEGIYRKCGQTSKTQRLLESLRQDARSVHLKEGEQHVDDVSSALKRFLRDLPDGLFTRAQRLTWLEASEIEDEEEKVSRYRELLVRLPPVNRATVKALISHLYCVQCFSDTNQMNVHNLAIVFGPTLFQTDGQDYKAGRVVEDLINHYVVVFSVDEEELRKQREEITAIVKMRVAGTASGTQHAGDFICTVYLEEKKAETEQHIKVPASMTAEELTLEILDRRNVGIREKDYWTCFEVNEREEAERPLHFAEKVLPILHGLGTDSHLVVKKHQAMEAMLLYLASRVGDTKHGMMKFREDRSLLGLGLPSGGFHDRYFILNSSCLRLYKEVRSQRPWSGAPETSHRPEKEWPIKSLKVYLGVKKKLRPPTCWGFTVVHETEKHEKQQWYLCCDTQMELREWFATFLFVQHDGLVWPSEPSRVSRAVPEVRLGSVSLIPLRGSENEMRRSVAAFTADPLSLLRNV</sequence>
<protein>
    <recommendedName>
        <fullName>Arf-GAP with Rho-GAP domain, ANK repeat and PH domain-containing protein 1</fullName>
    </recommendedName>
    <alternativeName>
        <fullName>Centaurin-delta-2</fullName>
        <shortName>Cnt-d2</shortName>
    </alternativeName>
</protein>
<dbReference type="EMBL" id="AY049732">
    <property type="protein sequence ID" value="AAL12169.1"/>
    <property type="molecule type" value="mRNA"/>
</dbReference>
<dbReference type="EMBL" id="AJ621557">
    <property type="protein sequence ID" value="CAF21317.1"/>
    <property type="molecule type" value="mRNA"/>
</dbReference>
<dbReference type="EMBL" id="AB018325">
    <property type="protein sequence ID" value="BAA34502.2"/>
    <property type="status" value="ALT_INIT"/>
    <property type="molecule type" value="mRNA"/>
</dbReference>
<dbReference type="EMBL" id="AY553630">
    <property type="protein sequence ID" value="AAT36325.1"/>
    <property type="molecule type" value="mRNA"/>
</dbReference>
<dbReference type="EMBL" id="AB209473">
    <property type="protein sequence ID" value="BAD92710.1"/>
    <property type="status" value="ALT_INIT"/>
    <property type="molecule type" value="mRNA"/>
</dbReference>
<dbReference type="EMBL" id="AP002381">
    <property type="status" value="NOT_ANNOTATED_CDS"/>
    <property type="molecule type" value="Genomic_DNA"/>
</dbReference>
<dbReference type="EMBL" id="AP003065">
    <property type="status" value="NOT_ANNOTATED_CDS"/>
    <property type="molecule type" value="Genomic_DNA"/>
</dbReference>
<dbReference type="EMBL" id="BC008315">
    <property type="protein sequence ID" value="AAH08315.1"/>
    <property type="molecule type" value="mRNA"/>
</dbReference>
<dbReference type="EMBL" id="BC021244">
    <property type="status" value="NOT_ANNOTATED_CDS"/>
    <property type="molecule type" value="mRNA"/>
</dbReference>
<dbReference type="EMBL" id="BC056401">
    <property type="protein sequence ID" value="AAH56401.1"/>
    <property type="molecule type" value="mRNA"/>
</dbReference>
<dbReference type="EMBL" id="BC140792">
    <property type="protein sequence ID" value="AAI40793.1"/>
    <property type="molecule type" value="mRNA"/>
</dbReference>
<dbReference type="EMBL" id="AF411983">
    <property type="protein sequence ID" value="AAL04167.1"/>
    <property type="molecule type" value="mRNA"/>
</dbReference>
<dbReference type="CCDS" id="CCDS41687.1">
    <molecule id="Q96P48-6"/>
</dbReference>
<dbReference type="CCDS" id="CCDS44671.1">
    <molecule id="Q96P48-7"/>
</dbReference>
<dbReference type="CCDS" id="CCDS8217.2">
    <molecule id="Q96P48-4"/>
</dbReference>
<dbReference type="PIR" id="C59431">
    <property type="entry name" value="C59431"/>
</dbReference>
<dbReference type="RefSeq" id="NP_001035207.1">
    <molecule id="Q96P48-6"/>
    <property type="nucleotide sequence ID" value="NM_001040118.3"/>
</dbReference>
<dbReference type="RefSeq" id="NP_001128662.1">
    <molecule id="Q96P48-7"/>
    <property type="nucleotide sequence ID" value="NM_001135190.2"/>
</dbReference>
<dbReference type="RefSeq" id="NP_056057.2">
    <molecule id="Q96P48-4"/>
    <property type="nucleotide sequence ID" value="NM_015242.5"/>
</dbReference>
<dbReference type="PDB" id="4X1V">
    <property type="method" value="X-ray"/>
    <property type="resolution" value="1.58 A"/>
    <property type="chains" value="B=76-91"/>
</dbReference>
<dbReference type="PDBsum" id="4X1V"/>
<dbReference type="SMR" id="Q96P48"/>
<dbReference type="BioGRID" id="125548">
    <property type="interactions" value="50"/>
</dbReference>
<dbReference type="FunCoup" id="Q96P48">
    <property type="interactions" value="2021"/>
</dbReference>
<dbReference type="IntAct" id="Q96P48">
    <property type="interactions" value="28"/>
</dbReference>
<dbReference type="MINT" id="Q96P48"/>
<dbReference type="STRING" id="9606.ENSP00000377233"/>
<dbReference type="GlyCosmos" id="Q96P48">
    <property type="glycosylation" value="1 site, 1 glycan"/>
</dbReference>
<dbReference type="GlyGen" id="Q96P48">
    <property type="glycosylation" value="3 sites, 1 O-linked glycan (1 site)"/>
</dbReference>
<dbReference type="iPTMnet" id="Q96P48"/>
<dbReference type="MetOSite" id="Q96P48"/>
<dbReference type="PhosphoSitePlus" id="Q96P48"/>
<dbReference type="SwissPalm" id="Q96P48"/>
<dbReference type="BioMuta" id="ARAP1"/>
<dbReference type="DMDM" id="226694321"/>
<dbReference type="jPOST" id="Q96P48"/>
<dbReference type="MassIVE" id="Q96P48"/>
<dbReference type="PaxDb" id="9606-ENSP00000377233"/>
<dbReference type="PeptideAtlas" id="Q96P48"/>
<dbReference type="ProteomicsDB" id="77622">
    <molecule id="Q96P48-6"/>
</dbReference>
<dbReference type="ProteomicsDB" id="77623">
    <molecule id="Q96P48-1"/>
</dbReference>
<dbReference type="ProteomicsDB" id="77624">
    <molecule id="Q96P48-2"/>
</dbReference>
<dbReference type="ProteomicsDB" id="77625">
    <molecule id="Q96P48-3"/>
</dbReference>
<dbReference type="ProteomicsDB" id="77626">
    <molecule id="Q96P48-4"/>
</dbReference>
<dbReference type="ProteomicsDB" id="77627">
    <molecule id="Q96P48-5"/>
</dbReference>
<dbReference type="ProteomicsDB" id="77628">
    <molecule id="Q96P48-7"/>
</dbReference>
<dbReference type="Pumba" id="Q96P48"/>
<dbReference type="Antibodypedia" id="30876">
    <property type="antibodies" value="180 antibodies from 30 providers"/>
</dbReference>
<dbReference type="DNASU" id="116985"/>
<dbReference type="Ensembl" id="ENST00000334211.12">
    <molecule id="Q96P48-4"/>
    <property type="protein sequence ID" value="ENSP00000335506.8"/>
    <property type="gene ID" value="ENSG00000186635.16"/>
</dbReference>
<dbReference type="Ensembl" id="ENST00000359373.9">
    <molecule id="Q96P48-3"/>
    <property type="protein sequence ID" value="ENSP00000352332.5"/>
    <property type="gene ID" value="ENSG00000186635.16"/>
</dbReference>
<dbReference type="Ensembl" id="ENST00000393605.7">
    <molecule id="Q96P48-1"/>
    <property type="protein sequence ID" value="ENSP00000377230.3"/>
    <property type="gene ID" value="ENSG00000186635.16"/>
</dbReference>
<dbReference type="Ensembl" id="ENST00000393609.8">
    <molecule id="Q96P48-6"/>
    <property type="protein sequence ID" value="ENSP00000377233.3"/>
    <property type="gene ID" value="ENSG00000186635.16"/>
</dbReference>
<dbReference type="Ensembl" id="ENST00000429686.5">
    <molecule id="Q96P48-7"/>
    <property type="protein sequence ID" value="ENSP00000403127.1"/>
    <property type="gene ID" value="ENSG00000186635.16"/>
</dbReference>
<dbReference type="GeneID" id="116985"/>
<dbReference type="KEGG" id="hsa:116985"/>
<dbReference type="MANE-Select" id="ENST00000393609.8">
    <property type="protein sequence ID" value="ENSP00000377233.3"/>
    <property type="RefSeq nucleotide sequence ID" value="NM_001040118.3"/>
    <property type="RefSeq protein sequence ID" value="NP_001035207.1"/>
</dbReference>
<dbReference type="UCSC" id="uc001osr.4">
    <molecule id="Q96P48-6"/>
    <property type="organism name" value="human"/>
</dbReference>
<dbReference type="AGR" id="HGNC:16925"/>
<dbReference type="CTD" id="116985"/>
<dbReference type="DisGeNET" id="116985"/>
<dbReference type="GeneCards" id="ARAP1"/>
<dbReference type="HGNC" id="HGNC:16925">
    <property type="gene designation" value="ARAP1"/>
</dbReference>
<dbReference type="HPA" id="ENSG00000186635">
    <property type="expression patterns" value="Low tissue specificity"/>
</dbReference>
<dbReference type="MIM" id="606646">
    <property type="type" value="gene"/>
</dbReference>
<dbReference type="neXtProt" id="NX_Q96P48"/>
<dbReference type="OpenTargets" id="ENSG00000186635"/>
<dbReference type="PharmGKB" id="PA164715867"/>
<dbReference type="VEuPathDB" id="HostDB:ENSG00000186635"/>
<dbReference type="eggNOG" id="KOG1117">
    <property type="taxonomic scope" value="Eukaryota"/>
</dbReference>
<dbReference type="GeneTree" id="ENSGT00940000157424"/>
<dbReference type="InParanoid" id="Q96P48"/>
<dbReference type="OMA" id="YEQCSSP"/>
<dbReference type="OrthoDB" id="29546at2759"/>
<dbReference type="PAN-GO" id="Q96P48">
    <property type="GO annotations" value="8 GO annotations based on evolutionary models"/>
</dbReference>
<dbReference type="PhylomeDB" id="Q96P48"/>
<dbReference type="TreeFam" id="TF105769"/>
<dbReference type="PathwayCommons" id="Q96P48"/>
<dbReference type="Reactome" id="R-HSA-8849469">
    <property type="pathway name" value="PTK6 Regulates RTKs and Their Effectors AKT1 and DOK1"/>
</dbReference>
<dbReference type="Reactome" id="R-HSA-8980692">
    <property type="pathway name" value="RHOA GTPase cycle"/>
</dbReference>
<dbReference type="Reactome" id="R-HSA-9013148">
    <property type="pathway name" value="CDC42 GTPase cycle"/>
</dbReference>
<dbReference type="Reactome" id="R-HSA-9013149">
    <property type="pathway name" value="RAC1 GTPase cycle"/>
</dbReference>
<dbReference type="SignaLink" id="Q96P48"/>
<dbReference type="SIGNOR" id="Q96P48"/>
<dbReference type="BioGRID-ORCS" id="116985">
    <property type="hits" value="21 hits in 1159 CRISPR screens"/>
</dbReference>
<dbReference type="ChiTaRS" id="ARAP1">
    <property type="organism name" value="human"/>
</dbReference>
<dbReference type="EvolutionaryTrace" id="Q96P48"/>
<dbReference type="GeneWiki" id="CENTD2"/>
<dbReference type="GenomeRNAi" id="116985"/>
<dbReference type="Pharos" id="Q96P48">
    <property type="development level" value="Tbio"/>
</dbReference>
<dbReference type="PRO" id="PR:Q96P48"/>
<dbReference type="Proteomes" id="UP000005640">
    <property type="component" value="Chromosome 11"/>
</dbReference>
<dbReference type="RNAct" id="Q96P48">
    <property type="molecule type" value="protein"/>
</dbReference>
<dbReference type="Bgee" id="ENSG00000186635">
    <property type="expression patterns" value="Expressed in granulocyte and 182 other cell types or tissues"/>
</dbReference>
<dbReference type="ExpressionAtlas" id="Q96P48">
    <property type="expression patterns" value="baseline and differential"/>
</dbReference>
<dbReference type="GO" id="GO:0005737">
    <property type="term" value="C:cytoplasm"/>
    <property type="evidence" value="ECO:0000318"/>
    <property type="project" value="GO_Central"/>
</dbReference>
<dbReference type="GO" id="GO:0005829">
    <property type="term" value="C:cytosol"/>
    <property type="evidence" value="ECO:0000314"/>
    <property type="project" value="HPA"/>
</dbReference>
<dbReference type="GO" id="GO:0005769">
    <property type="term" value="C:early endosome"/>
    <property type="evidence" value="ECO:0000250"/>
    <property type="project" value="UniProtKB"/>
</dbReference>
<dbReference type="GO" id="GO:0019897">
    <property type="term" value="C:extrinsic component of plasma membrane"/>
    <property type="evidence" value="ECO:0000314"/>
    <property type="project" value="UniProtKB"/>
</dbReference>
<dbReference type="GO" id="GO:0005794">
    <property type="term" value="C:Golgi apparatus"/>
    <property type="evidence" value="ECO:0000314"/>
    <property type="project" value="UniProtKB"/>
</dbReference>
<dbReference type="GO" id="GO:0005795">
    <property type="term" value="C:Golgi stack"/>
    <property type="evidence" value="ECO:0007669"/>
    <property type="project" value="UniProtKB-SubCell"/>
</dbReference>
<dbReference type="GO" id="GO:0043231">
    <property type="term" value="C:intracellular membrane-bounded organelle"/>
    <property type="evidence" value="ECO:0000314"/>
    <property type="project" value="HPA"/>
</dbReference>
<dbReference type="GO" id="GO:0005771">
    <property type="term" value="C:multivesicular body"/>
    <property type="evidence" value="ECO:0000314"/>
    <property type="project" value="UniProtKB"/>
</dbReference>
<dbReference type="GO" id="GO:0005654">
    <property type="term" value="C:nucleoplasm"/>
    <property type="evidence" value="ECO:0000314"/>
    <property type="project" value="HPA"/>
</dbReference>
<dbReference type="GO" id="GO:0005886">
    <property type="term" value="C:plasma membrane"/>
    <property type="evidence" value="ECO:0000314"/>
    <property type="project" value="HPA"/>
</dbReference>
<dbReference type="GO" id="GO:0002102">
    <property type="term" value="C:podosome"/>
    <property type="evidence" value="ECO:0000250"/>
    <property type="project" value="UniProtKB"/>
</dbReference>
<dbReference type="GO" id="GO:0001726">
    <property type="term" value="C:ruffle"/>
    <property type="evidence" value="ECO:0007669"/>
    <property type="project" value="UniProtKB-SubCell"/>
</dbReference>
<dbReference type="GO" id="GO:0005802">
    <property type="term" value="C:trans-Golgi network"/>
    <property type="evidence" value="ECO:0000318"/>
    <property type="project" value="GO_Central"/>
</dbReference>
<dbReference type="GO" id="GO:0005096">
    <property type="term" value="F:GTPase activator activity"/>
    <property type="evidence" value="ECO:0000314"/>
    <property type="project" value="UniProtKB"/>
</dbReference>
<dbReference type="GO" id="GO:0005547">
    <property type="term" value="F:phosphatidylinositol-3,4,5-trisphosphate binding"/>
    <property type="evidence" value="ECO:0000314"/>
    <property type="project" value="UniProtKB"/>
</dbReference>
<dbReference type="GO" id="GO:0031702">
    <property type="term" value="F:type 1 angiotensin receptor binding"/>
    <property type="evidence" value="ECO:0007669"/>
    <property type="project" value="Ensembl"/>
</dbReference>
<dbReference type="GO" id="GO:0008270">
    <property type="term" value="F:zinc ion binding"/>
    <property type="evidence" value="ECO:0007669"/>
    <property type="project" value="UniProtKB-KW"/>
</dbReference>
<dbReference type="GO" id="GO:0007015">
    <property type="term" value="P:actin filament organization"/>
    <property type="evidence" value="ECO:0000304"/>
    <property type="project" value="UniProtKB"/>
</dbReference>
<dbReference type="GO" id="GO:0051497">
    <property type="term" value="P:negative regulation of stress fiber assembly"/>
    <property type="evidence" value="ECO:0000315"/>
    <property type="project" value="UniProtKB"/>
</dbReference>
<dbReference type="GO" id="GO:0045494">
    <property type="term" value="P:photoreceptor cell maintenance"/>
    <property type="evidence" value="ECO:0000250"/>
    <property type="project" value="UniProtKB"/>
</dbReference>
<dbReference type="GO" id="GO:0051491">
    <property type="term" value="P:positive regulation of filopodium assembly"/>
    <property type="evidence" value="ECO:0000315"/>
    <property type="project" value="UniProtKB"/>
</dbReference>
<dbReference type="GO" id="GO:0043547">
    <property type="term" value="P:positive regulation of GTPase activity"/>
    <property type="evidence" value="ECO:0000314"/>
    <property type="project" value="UniProtKB"/>
</dbReference>
<dbReference type="GO" id="GO:0050766">
    <property type="term" value="P:positive regulation of phagocytosis"/>
    <property type="evidence" value="ECO:0000250"/>
    <property type="project" value="UniProtKB"/>
</dbReference>
<dbReference type="GO" id="GO:0001921">
    <property type="term" value="P:positive regulation of receptor recycling"/>
    <property type="evidence" value="ECO:0007669"/>
    <property type="project" value="Ensembl"/>
</dbReference>
<dbReference type="GO" id="GO:0032956">
    <property type="term" value="P:regulation of actin cytoskeleton organization"/>
    <property type="evidence" value="ECO:0000318"/>
    <property type="project" value="GO_Central"/>
</dbReference>
<dbReference type="GO" id="GO:0045124">
    <property type="term" value="P:regulation of bone resorption"/>
    <property type="evidence" value="ECO:0000250"/>
    <property type="project" value="UniProtKB"/>
</dbReference>
<dbReference type="GO" id="GO:0031344">
    <property type="term" value="P:regulation of cell projection organization"/>
    <property type="evidence" value="ECO:0000318"/>
    <property type="project" value="GO_Central"/>
</dbReference>
<dbReference type="GO" id="GO:0008360">
    <property type="term" value="P:regulation of cell shape"/>
    <property type="evidence" value="ECO:0000315"/>
    <property type="project" value="UniProtKB"/>
</dbReference>
<dbReference type="GO" id="GO:0002090">
    <property type="term" value="P:regulation of receptor internalization"/>
    <property type="evidence" value="ECO:0000315"/>
    <property type="project" value="UniProtKB"/>
</dbReference>
<dbReference type="GO" id="GO:0051056">
    <property type="term" value="P:regulation of small GTPase mediated signal transduction"/>
    <property type="evidence" value="ECO:0000304"/>
    <property type="project" value="Reactome"/>
</dbReference>
<dbReference type="GO" id="GO:0007165">
    <property type="term" value="P:signal transduction"/>
    <property type="evidence" value="ECO:0007669"/>
    <property type="project" value="InterPro"/>
</dbReference>
<dbReference type="CDD" id="cd08837">
    <property type="entry name" value="ArfGap_ARAP"/>
    <property type="match status" value="1"/>
</dbReference>
<dbReference type="CDD" id="cd13253">
    <property type="entry name" value="PH1_ARAP"/>
    <property type="match status" value="1"/>
</dbReference>
<dbReference type="CDD" id="cd13254">
    <property type="entry name" value="PH2_ARAP"/>
    <property type="match status" value="1"/>
</dbReference>
<dbReference type="CDD" id="cd13256">
    <property type="entry name" value="PH3_ARAP"/>
    <property type="match status" value="1"/>
</dbReference>
<dbReference type="CDD" id="cd13257">
    <property type="entry name" value="PH4_ARAP"/>
    <property type="match status" value="1"/>
</dbReference>
<dbReference type="CDD" id="cd13259">
    <property type="entry name" value="PH5_ARAP"/>
    <property type="match status" value="1"/>
</dbReference>
<dbReference type="CDD" id="cd17226">
    <property type="entry name" value="RA_ARAP1"/>
    <property type="match status" value="1"/>
</dbReference>
<dbReference type="CDD" id="cd04385">
    <property type="entry name" value="RhoGAP_ARAP"/>
    <property type="match status" value="1"/>
</dbReference>
<dbReference type="CDD" id="cd09490">
    <property type="entry name" value="SAM_Arap1_2_3"/>
    <property type="match status" value="1"/>
</dbReference>
<dbReference type="FunFam" id="1.10.555.10:FF:000023">
    <property type="entry name" value="Arf-GAP with Rho-GAP domain, ANK repeat and PH domain-containing protein 1"/>
    <property type="match status" value="1"/>
</dbReference>
<dbReference type="FunFam" id="2.30.29.30:FF:000170">
    <property type="entry name" value="Arf-GAP with Rho-GAP domain, ANK repeat and PH domain-containing protein 1"/>
    <property type="match status" value="1"/>
</dbReference>
<dbReference type="FunFam" id="2.30.29.30:FF:000173">
    <property type="entry name" value="Arf-GAP with Rho-GAP domain, ANK repeat and PH domain-containing protein 1"/>
    <property type="match status" value="1"/>
</dbReference>
<dbReference type="FunFam" id="2.30.29.30:FF:000181">
    <property type="entry name" value="Arf-GAP with Rho-GAP domain, ANK repeat and PH domain-containing protein 1"/>
    <property type="match status" value="1"/>
</dbReference>
<dbReference type="FunFam" id="2.30.29.30:FF:000186">
    <property type="entry name" value="Arf-GAP with Rho-GAP domain, ANK repeat and PH domain-containing protein 1"/>
    <property type="match status" value="1"/>
</dbReference>
<dbReference type="FunFam" id="3.10.20.90:FF:000136">
    <property type="entry name" value="Arf-GAP with Rho-GAP domain, ANK repeat and PH domain-containing protein 1"/>
    <property type="match status" value="1"/>
</dbReference>
<dbReference type="FunFam" id="1.10.150.50:FF:000064">
    <property type="entry name" value="arf-GAP with Rho-GAP domain, ANK repeat and PH domain-containing protein 1 isoform X1"/>
    <property type="match status" value="1"/>
</dbReference>
<dbReference type="FunFam" id="1.10.220.150:FF:000006">
    <property type="entry name" value="arf-GAP with Rho-GAP domain, ANK repeat and PH domain-containing protein 3"/>
    <property type="match status" value="1"/>
</dbReference>
<dbReference type="Gene3D" id="1.10.220.150">
    <property type="entry name" value="Arf GTPase activating protein"/>
    <property type="match status" value="1"/>
</dbReference>
<dbReference type="Gene3D" id="3.10.20.90">
    <property type="entry name" value="Phosphatidylinositol 3-kinase Catalytic Subunit, Chain A, domain 1"/>
    <property type="match status" value="1"/>
</dbReference>
<dbReference type="Gene3D" id="2.30.29.30">
    <property type="entry name" value="Pleckstrin-homology domain (PH domain)/Phosphotyrosine-binding domain (PTB)"/>
    <property type="match status" value="4"/>
</dbReference>
<dbReference type="Gene3D" id="1.10.555.10">
    <property type="entry name" value="Rho GTPase activation protein"/>
    <property type="match status" value="1"/>
</dbReference>
<dbReference type="Gene3D" id="1.10.150.50">
    <property type="entry name" value="Transcription Factor, Ets-1"/>
    <property type="match status" value="1"/>
</dbReference>
<dbReference type="InterPro" id="IPR052227">
    <property type="entry name" value="Arf-Rho-GAP_ANK-PH_domain"/>
</dbReference>
<dbReference type="InterPro" id="IPR037278">
    <property type="entry name" value="ARFGAP/RecO"/>
</dbReference>
<dbReference type="InterPro" id="IPR001164">
    <property type="entry name" value="ArfGAP_dom"/>
</dbReference>
<dbReference type="InterPro" id="IPR038508">
    <property type="entry name" value="ArfGAP_dom_sf"/>
</dbReference>
<dbReference type="InterPro" id="IPR011993">
    <property type="entry name" value="PH-like_dom_sf"/>
</dbReference>
<dbReference type="InterPro" id="IPR001849">
    <property type="entry name" value="PH_domain"/>
</dbReference>
<dbReference type="InterPro" id="IPR000159">
    <property type="entry name" value="RA_dom"/>
</dbReference>
<dbReference type="InterPro" id="IPR008936">
    <property type="entry name" value="Rho_GTPase_activation_prot"/>
</dbReference>
<dbReference type="InterPro" id="IPR037858">
    <property type="entry name" value="RhoGAP_ARAP"/>
</dbReference>
<dbReference type="InterPro" id="IPR000198">
    <property type="entry name" value="RhoGAP_dom"/>
</dbReference>
<dbReference type="InterPro" id="IPR001660">
    <property type="entry name" value="SAM"/>
</dbReference>
<dbReference type="InterPro" id="IPR013761">
    <property type="entry name" value="SAM/pointed_sf"/>
</dbReference>
<dbReference type="PANTHER" id="PTHR45899:SF3">
    <property type="entry name" value="ARF-GAP WITH RHO-GAP DOMAIN, ANK REPEAT AND PH DOMAIN-CONTAINING PROTEIN 1"/>
    <property type="match status" value="1"/>
</dbReference>
<dbReference type="PANTHER" id="PTHR45899">
    <property type="entry name" value="RHO GTPASE ACTIVATING PROTEIN AT 15B, ISOFORM C"/>
    <property type="match status" value="1"/>
</dbReference>
<dbReference type="Pfam" id="PF01412">
    <property type="entry name" value="ArfGap"/>
    <property type="match status" value="1"/>
</dbReference>
<dbReference type="Pfam" id="PF00169">
    <property type="entry name" value="PH"/>
    <property type="match status" value="3"/>
</dbReference>
<dbReference type="Pfam" id="PF00788">
    <property type="entry name" value="RA"/>
    <property type="match status" value="1"/>
</dbReference>
<dbReference type="Pfam" id="PF00620">
    <property type="entry name" value="RhoGAP"/>
    <property type="match status" value="1"/>
</dbReference>
<dbReference type="Pfam" id="PF00536">
    <property type="entry name" value="SAM_1"/>
    <property type="match status" value="1"/>
</dbReference>
<dbReference type="PRINTS" id="PR00405">
    <property type="entry name" value="REVINTRACTNG"/>
</dbReference>
<dbReference type="SMART" id="SM00105">
    <property type="entry name" value="ArfGap"/>
    <property type="match status" value="1"/>
</dbReference>
<dbReference type="SMART" id="SM00233">
    <property type="entry name" value="PH"/>
    <property type="match status" value="5"/>
</dbReference>
<dbReference type="SMART" id="SM00324">
    <property type="entry name" value="RhoGAP"/>
    <property type="match status" value="1"/>
</dbReference>
<dbReference type="SMART" id="SM00454">
    <property type="entry name" value="SAM"/>
    <property type="match status" value="1"/>
</dbReference>
<dbReference type="SUPFAM" id="SSF57863">
    <property type="entry name" value="ArfGap/RecO-like zinc finger"/>
    <property type="match status" value="1"/>
</dbReference>
<dbReference type="SUPFAM" id="SSF48350">
    <property type="entry name" value="GTPase activation domain, GAP"/>
    <property type="match status" value="1"/>
</dbReference>
<dbReference type="SUPFAM" id="SSF50729">
    <property type="entry name" value="PH domain-like"/>
    <property type="match status" value="5"/>
</dbReference>
<dbReference type="SUPFAM" id="SSF47769">
    <property type="entry name" value="SAM/Pointed domain"/>
    <property type="match status" value="1"/>
</dbReference>
<dbReference type="PROSITE" id="PS50115">
    <property type="entry name" value="ARFGAP"/>
    <property type="match status" value="1"/>
</dbReference>
<dbReference type="PROSITE" id="PS50003">
    <property type="entry name" value="PH_DOMAIN"/>
    <property type="match status" value="4"/>
</dbReference>
<dbReference type="PROSITE" id="PS50200">
    <property type="entry name" value="RA"/>
    <property type="match status" value="1"/>
</dbReference>
<dbReference type="PROSITE" id="PS50238">
    <property type="entry name" value="RHOGAP"/>
    <property type="match status" value="1"/>
</dbReference>
<dbReference type="PROSITE" id="PS50105">
    <property type="entry name" value="SAM_DOMAIN"/>
    <property type="match status" value="1"/>
</dbReference>
<name>ARAP1_HUMAN</name>
<accession>Q96P48</accession>
<accession>A3KLL7</accession>
<accession>B2RTS2</accession>
<accession>O94879</accession>
<accession>Q4LDD5</accession>
<accession>Q59FI7</accession>
<accession>Q6PHS3</accession>
<accession>Q8WU51</accession>
<accession>Q96HP6</accession>
<accession>Q96L71</accession>
<feature type="chain" id="PRO_0000074214" description="Arf-GAP with Rho-GAP domain, ANK repeat and PH domain-containing protein 1">
    <location>
        <begin position="1"/>
        <end position="1450"/>
    </location>
</feature>
<feature type="domain" description="SAM" evidence="5">
    <location>
        <begin position="6"/>
        <end position="70"/>
    </location>
</feature>
<feature type="domain" description="PH 1" evidence="2">
    <location>
        <begin position="327"/>
        <end position="419"/>
    </location>
</feature>
<feature type="domain" description="PH 2" evidence="2">
    <location>
        <begin position="440"/>
        <end position="529"/>
    </location>
</feature>
<feature type="domain" description="Arf-GAP" evidence="6">
    <location>
        <begin position="535"/>
        <end position="660"/>
    </location>
</feature>
<feature type="domain" description="PH 3" evidence="2">
    <location>
        <begin position="743"/>
        <end position="850"/>
    </location>
</feature>
<feature type="domain" description="Rho-GAP" evidence="4">
    <location>
        <begin position="954"/>
        <end position="1139"/>
    </location>
</feature>
<feature type="domain" description="Ras-associating" evidence="3">
    <location>
        <begin position="1172"/>
        <end position="1261"/>
    </location>
</feature>
<feature type="domain" description="PH 4" evidence="2">
    <location>
        <begin position="1274"/>
        <end position="1396"/>
    </location>
</feature>
<feature type="zinc finger region" description="C4-type" evidence="6">
    <location>
        <begin position="550"/>
        <end position="576"/>
    </location>
</feature>
<feature type="region of interest" description="Required for interaction with SH3KBP1" evidence="14">
    <location>
        <begin position="81"/>
        <end position="90"/>
    </location>
</feature>
<feature type="region of interest" description="Disordered" evidence="7">
    <location>
        <begin position="89"/>
        <end position="144"/>
    </location>
</feature>
<feature type="region of interest" description="Disordered" evidence="7">
    <location>
        <begin position="173"/>
        <end position="302"/>
    </location>
</feature>
<feature type="compositionally biased region" description="Pro residues" evidence="7">
    <location>
        <begin position="92"/>
        <end position="102"/>
    </location>
</feature>
<feature type="compositionally biased region" description="Low complexity" evidence="7">
    <location>
        <begin position="190"/>
        <end position="199"/>
    </location>
</feature>
<feature type="compositionally biased region" description="Pro residues" evidence="7">
    <location>
        <begin position="200"/>
        <end position="219"/>
    </location>
</feature>
<feature type="compositionally biased region" description="Acidic residues" evidence="7">
    <location>
        <begin position="225"/>
        <end position="236"/>
    </location>
</feature>
<feature type="compositionally biased region" description="Acidic residues" evidence="7">
    <location>
        <begin position="269"/>
        <end position="286"/>
    </location>
</feature>
<feature type="site" description="Arginine finger; crucial for GTP hydrolysis by stabilizing the transition state" evidence="4">
    <location>
        <position position="993"/>
    </location>
</feature>
<feature type="modified residue" description="Phosphoserine" evidence="26">
    <location>
        <position position="229"/>
    </location>
</feature>
<feature type="modified residue" description="Phosphotyrosine; by PTK6" evidence="13">
    <location>
        <position position="231"/>
    </location>
</feature>
<feature type="modified residue" description="Phosphothreonine" evidence="25">
    <location>
        <position position="354"/>
    </location>
</feature>
<feature type="modified residue" description="Phosphoserine" evidence="28 29">
    <location>
        <position position="428"/>
    </location>
</feature>
<feature type="modified residue" description="Phosphotyrosine" evidence="26">
    <location>
        <position position="431"/>
    </location>
</feature>
<feature type="modified residue" description="Phosphotyrosine" evidence="29">
    <location>
        <position position="504"/>
    </location>
</feature>
<feature type="modified residue" description="Phosphoserine" evidence="27 29">
    <location>
        <position position="738"/>
    </location>
</feature>
<feature type="modified residue" description="Phosphoserine" evidence="29">
    <location>
        <position position="1428"/>
    </location>
</feature>
<feature type="modified residue" description="Phosphoserine" evidence="26 27">
    <location>
        <position position="1435"/>
    </location>
</feature>
<feature type="splice variant" id="VSP_014998" description="In isoform 5." evidence="19">
    <location>
        <begin position="1"/>
        <end position="760"/>
    </location>
</feature>
<feature type="splice variant" id="VSP_015000" description="In isoform 4 and isoform 7." evidence="19 21">
    <location>
        <begin position="1"/>
        <end position="245"/>
    </location>
</feature>
<feature type="splice variant" id="VSP_036607" description="In isoform 1 and isoform 2." evidence="18 23">
    <location>
        <begin position="1"/>
        <end position="240"/>
    </location>
</feature>
<feature type="splice variant" id="VSP_036608" description="In isoform 1 and isoform 2." evidence="18 23">
    <original>APARVMTKK</original>
    <variation>MTLSGSRGQ</variation>
    <location>
        <begin position="241"/>
        <end position="249"/>
    </location>
</feature>
<feature type="splice variant" id="VSP_043530" description="In isoform 7." evidence="19">
    <location>
        <begin position="604"/>
        <end position="664"/>
    </location>
</feature>
<feature type="splice variant" id="VSP_015001" description="In isoform 5." evidence="19">
    <original>QDRRARE</original>
    <variation>MDASGKG</variation>
    <location>
        <begin position="761"/>
        <end position="767"/>
    </location>
</feature>
<feature type="splice variant" id="VSP_000311" description="In isoform 2, isoform 3, isoform 5 and isoform 7." evidence="19 22">
    <location>
        <begin position="1320"/>
        <end position="1330"/>
    </location>
</feature>
<feature type="sequence variant" id="VAR_055529" description="In dbSNP:rs34976830.">
    <original>R</original>
    <variation>Q</variation>
    <location>
        <position position="358"/>
    </location>
</feature>
<feature type="sequence variant" id="VAR_061023" description="In dbSNP:rs56200889." evidence="17">
    <original>Q</original>
    <variation>E</variation>
    <location>
        <position position="1047"/>
    </location>
</feature>
<feature type="mutagenesis site" description="No effect on phosphorylation by PTK6." evidence="13">
    <original>Y</original>
    <variation>F</variation>
    <location>
        <position position="23"/>
    </location>
</feature>
<feature type="mutagenesis site" description="Reduced interaction with SH3KBP1." evidence="14">
    <original>PVPMKR</original>
    <variation>AVAMKA</variation>
    <location>
        <begin position="81"/>
        <end position="86"/>
    </location>
</feature>
<feature type="mutagenesis site" description="Slightly reduced interaction with SH3KBP1." evidence="14">
    <original>P</original>
    <variation>A</variation>
    <location>
        <position position="81"/>
    </location>
</feature>
<feature type="mutagenesis site" description="Reduced interaction with SH3KBP1." evidence="14">
    <original>RHIFR</original>
    <variation>AHIFA</variation>
    <location>
        <begin position="86"/>
        <end position="90"/>
    </location>
</feature>
<feature type="mutagenesis site" description="Abolishes phosphorylation by PTK6." evidence="13">
    <original>Y</original>
    <variation>F</variation>
    <location>
        <position position="231"/>
    </location>
</feature>
<feature type="mutagenesis site" description="No effect on phosphorylation by PTK6." evidence="13">
    <original>Y</original>
    <variation>F</variation>
    <location>
        <position position="288"/>
    </location>
</feature>
<feature type="mutagenesis site" description="Abolishes effect on circular dorsal ruffle size." evidence="15">
    <original>R</original>
    <variation>K</variation>
    <location>
        <position position="578"/>
    </location>
</feature>
<feature type="mutagenesis site" description="No effect on regulation of circular dorsal ruffle size." evidence="15">
    <original>R</original>
    <variation>K</variation>
    <location>
        <position position="993"/>
    </location>
</feature>
<feature type="sequence conflict" description="In Ref. 8; AAH56401." evidence="24" ref="8">
    <original>V</original>
    <variation>M</variation>
    <location>
        <position position="1408"/>
    </location>
</feature>
<keyword id="KW-0002">3D-structure</keyword>
<keyword id="KW-0025">Alternative splicing</keyword>
<keyword id="KW-0965">Cell junction</keyword>
<keyword id="KW-1003">Cell membrane</keyword>
<keyword id="KW-0966">Cell projection</keyword>
<keyword id="KW-0963">Cytoplasm</keyword>
<keyword id="KW-0967">Endosome</keyword>
<keyword id="KW-0333">Golgi apparatus</keyword>
<keyword id="KW-0343">GTPase activation</keyword>
<keyword id="KW-0472">Membrane</keyword>
<keyword id="KW-0479">Metal-binding</keyword>
<keyword id="KW-0597">Phosphoprotein</keyword>
<keyword id="KW-1267">Proteomics identification</keyword>
<keyword id="KW-1185">Reference proteome</keyword>
<keyword id="KW-0677">Repeat</keyword>
<keyword id="KW-0862">Zinc</keyword>
<keyword id="KW-0863">Zinc-finger</keyword>
<gene>
    <name type="primary">ARAP1</name>
    <name type="synonym">CENTD2</name>
    <name type="synonym">KIAA0782</name>
</gene>